<dbReference type="EC" id="6.3.4.19" evidence="1"/>
<dbReference type="EMBL" id="AL513382">
    <property type="protein sequence ID" value="CAD08695.1"/>
    <property type="molecule type" value="Genomic_DNA"/>
</dbReference>
<dbReference type="EMBL" id="AE014613">
    <property type="protein sequence ID" value="AAO67967.1"/>
    <property type="molecule type" value="Genomic_DNA"/>
</dbReference>
<dbReference type="RefSeq" id="NP_454844.1">
    <property type="nucleotide sequence ID" value="NC_003198.1"/>
</dbReference>
<dbReference type="RefSeq" id="WP_000210062.1">
    <property type="nucleotide sequence ID" value="NZ_WSUR01000060.1"/>
</dbReference>
<dbReference type="SMR" id="Q8Z996"/>
<dbReference type="STRING" id="220341.gene:17584293"/>
<dbReference type="KEGG" id="stt:t0238"/>
<dbReference type="KEGG" id="sty:STY0261"/>
<dbReference type="PATRIC" id="fig|220341.7.peg.262"/>
<dbReference type="eggNOG" id="COG0037">
    <property type="taxonomic scope" value="Bacteria"/>
</dbReference>
<dbReference type="HOGENOM" id="CLU_018869_2_0_6"/>
<dbReference type="OMA" id="QTETFFL"/>
<dbReference type="OrthoDB" id="9807403at2"/>
<dbReference type="Proteomes" id="UP000000541">
    <property type="component" value="Chromosome"/>
</dbReference>
<dbReference type="Proteomes" id="UP000002670">
    <property type="component" value="Chromosome"/>
</dbReference>
<dbReference type="GO" id="GO:0005737">
    <property type="term" value="C:cytoplasm"/>
    <property type="evidence" value="ECO:0007669"/>
    <property type="project" value="UniProtKB-SubCell"/>
</dbReference>
<dbReference type="GO" id="GO:0005524">
    <property type="term" value="F:ATP binding"/>
    <property type="evidence" value="ECO:0007669"/>
    <property type="project" value="UniProtKB-UniRule"/>
</dbReference>
<dbReference type="GO" id="GO:0032267">
    <property type="term" value="F:tRNA(Ile)-lysidine synthase activity"/>
    <property type="evidence" value="ECO:0007669"/>
    <property type="project" value="UniProtKB-EC"/>
</dbReference>
<dbReference type="GO" id="GO:0006400">
    <property type="term" value="P:tRNA modification"/>
    <property type="evidence" value="ECO:0007669"/>
    <property type="project" value="UniProtKB-UniRule"/>
</dbReference>
<dbReference type="CDD" id="cd01992">
    <property type="entry name" value="TilS_N"/>
    <property type="match status" value="1"/>
</dbReference>
<dbReference type="FunFam" id="3.40.50.620:FF:000173">
    <property type="entry name" value="tRNA(Ile)-lysidine synthase"/>
    <property type="match status" value="1"/>
</dbReference>
<dbReference type="Gene3D" id="1.20.59.20">
    <property type="match status" value="1"/>
</dbReference>
<dbReference type="Gene3D" id="3.40.50.620">
    <property type="entry name" value="HUPs"/>
    <property type="match status" value="1"/>
</dbReference>
<dbReference type="HAMAP" id="MF_01161">
    <property type="entry name" value="tRNA_Ile_lys_synt"/>
    <property type="match status" value="1"/>
</dbReference>
<dbReference type="InterPro" id="IPR012796">
    <property type="entry name" value="Lysidine-tRNA-synth_C"/>
</dbReference>
<dbReference type="InterPro" id="IPR014729">
    <property type="entry name" value="Rossmann-like_a/b/a_fold"/>
</dbReference>
<dbReference type="InterPro" id="IPR011063">
    <property type="entry name" value="TilS/TtcA_N"/>
</dbReference>
<dbReference type="InterPro" id="IPR012094">
    <property type="entry name" value="tRNA_Ile_lys_synt"/>
</dbReference>
<dbReference type="InterPro" id="IPR012795">
    <property type="entry name" value="tRNA_Ile_lys_synt_N"/>
</dbReference>
<dbReference type="InterPro" id="IPR015262">
    <property type="entry name" value="tRNA_Ile_lys_synt_subst-bd"/>
</dbReference>
<dbReference type="NCBIfam" id="TIGR02433">
    <property type="entry name" value="lysidine_TilS_C"/>
    <property type="match status" value="1"/>
</dbReference>
<dbReference type="NCBIfam" id="TIGR02432">
    <property type="entry name" value="lysidine_TilS_N"/>
    <property type="match status" value="1"/>
</dbReference>
<dbReference type="NCBIfam" id="NF007942">
    <property type="entry name" value="PRK10660.1"/>
    <property type="match status" value="1"/>
</dbReference>
<dbReference type="PANTHER" id="PTHR43033">
    <property type="entry name" value="TRNA(ILE)-LYSIDINE SYNTHASE-RELATED"/>
    <property type="match status" value="1"/>
</dbReference>
<dbReference type="PANTHER" id="PTHR43033:SF1">
    <property type="entry name" value="TRNA(ILE)-LYSIDINE SYNTHASE-RELATED"/>
    <property type="match status" value="1"/>
</dbReference>
<dbReference type="Pfam" id="PF01171">
    <property type="entry name" value="ATP_bind_3"/>
    <property type="match status" value="1"/>
</dbReference>
<dbReference type="Pfam" id="PF09179">
    <property type="entry name" value="TilS"/>
    <property type="match status" value="1"/>
</dbReference>
<dbReference type="Pfam" id="PF11734">
    <property type="entry name" value="TilS_C"/>
    <property type="match status" value="1"/>
</dbReference>
<dbReference type="SMART" id="SM00977">
    <property type="entry name" value="TilS_C"/>
    <property type="match status" value="1"/>
</dbReference>
<dbReference type="SUPFAM" id="SSF52402">
    <property type="entry name" value="Adenine nucleotide alpha hydrolases-like"/>
    <property type="match status" value="1"/>
</dbReference>
<dbReference type="SUPFAM" id="SSF82829">
    <property type="entry name" value="MesJ substrate recognition domain-like"/>
    <property type="match status" value="1"/>
</dbReference>
<dbReference type="SUPFAM" id="SSF56037">
    <property type="entry name" value="PheT/TilS domain"/>
    <property type="match status" value="1"/>
</dbReference>
<evidence type="ECO:0000255" key="1">
    <source>
        <dbReference type="HAMAP-Rule" id="MF_01161"/>
    </source>
</evidence>
<organism>
    <name type="scientific">Salmonella typhi</name>
    <dbReference type="NCBI Taxonomy" id="90370"/>
    <lineage>
        <taxon>Bacteria</taxon>
        <taxon>Pseudomonadati</taxon>
        <taxon>Pseudomonadota</taxon>
        <taxon>Gammaproteobacteria</taxon>
        <taxon>Enterobacterales</taxon>
        <taxon>Enterobacteriaceae</taxon>
        <taxon>Salmonella</taxon>
    </lineage>
</organism>
<comment type="function">
    <text evidence="1">Ligates lysine onto the cytidine present at position 34 of the AUA codon-specific tRNA(Ile) that contains the anticodon CAU, in an ATP-dependent manner. Cytidine is converted to lysidine, thus changing the amino acid specificity of the tRNA from methionine to isoleucine.</text>
</comment>
<comment type="catalytic activity">
    <reaction evidence="1">
        <text>cytidine(34) in tRNA(Ile2) + L-lysine + ATP = lysidine(34) in tRNA(Ile2) + AMP + diphosphate + H(+)</text>
        <dbReference type="Rhea" id="RHEA:43744"/>
        <dbReference type="Rhea" id="RHEA-COMP:10625"/>
        <dbReference type="Rhea" id="RHEA-COMP:10670"/>
        <dbReference type="ChEBI" id="CHEBI:15378"/>
        <dbReference type="ChEBI" id="CHEBI:30616"/>
        <dbReference type="ChEBI" id="CHEBI:32551"/>
        <dbReference type="ChEBI" id="CHEBI:33019"/>
        <dbReference type="ChEBI" id="CHEBI:82748"/>
        <dbReference type="ChEBI" id="CHEBI:83665"/>
        <dbReference type="ChEBI" id="CHEBI:456215"/>
        <dbReference type="EC" id="6.3.4.19"/>
    </reaction>
</comment>
<comment type="subcellular location">
    <subcellularLocation>
        <location evidence="1">Cytoplasm</location>
    </subcellularLocation>
</comment>
<comment type="domain">
    <text>The N-terminal region contains the highly conserved SGGXDS motif, predicted to be a P-loop motif involved in ATP binding.</text>
</comment>
<comment type="similarity">
    <text evidence="1">Belongs to the tRNA(Ile)-lysidine synthase family.</text>
</comment>
<feature type="chain" id="PRO_0000181760" description="tRNA(Ile)-lysidine synthase">
    <location>
        <begin position="1"/>
        <end position="430"/>
    </location>
</feature>
<feature type="binding site" evidence="1">
    <location>
        <begin position="21"/>
        <end position="26"/>
    </location>
    <ligand>
        <name>ATP</name>
        <dbReference type="ChEBI" id="CHEBI:30616"/>
    </ligand>
</feature>
<protein>
    <recommendedName>
        <fullName evidence="1">tRNA(Ile)-lysidine synthase</fullName>
        <ecNumber evidence="1">6.3.4.19</ecNumber>
    </recommendedName>
    <alternativeName>
        <fullName evidence="1">tRNA(Ile)-2-lysyl-cytidine synthase</fullName>
    </alternativeName>
    <alternativeName>
        <fullName evidence="1">tRNA(Ile)-lysidine synthetase</fullName>
    </alternativeName>
</protein>
<reference key="1">
    <citation type="journal article" date="2001" name="Nature">
        <title>Complete genome sequence of a multiple drug resistant Salmonella enterica serovar Typhi CT18.</title>
        <authorList>
            <person name="Parkhill J."/>
            <person name="Dougan G."/>
            <person name="James K.D."/>
            <person name="Thomson N.R."/>
            <person name="Pickard D."/>
            <person name="Wain J."/>
            <person name="Churcher C.M."/>
            <person name="Mungall K.L."/>
            <person name="Bentley S.D."/>
            <person name="Holden M.T.G."/>
            <person name="Sebaihia M."/>
            <person name="Baker S."/>
            <person name="Basham D."/>
            <person name="Brooks K."/>
            <person name="Chillingworth T."/>
            <person name="Connerton P."/>
            <person name="Cronin A."/>
            <person name="Davis P."/>
            <person name="Davies R.M."/>
            <person name="Dowd L."/>
            <person name="White N."/>
            <person name="Farrar J."/>
            <person name="Feltwell T."/>
            <person name="Hamlin N."/>
            <person name="Haque A."/>
            <person name="Hien T.T."/>
            <person name="Holroyd S."/>
            <person name="Jagels K."/>
            <person name="Krogh A."/>
            <person name="Larsen T.S."/>
            <person name="Leather S."/>
            <person name="Moule S."/>
            <person name="O'Gaora P."/>
            <person name="Parry C."/>
            <person name="Quail M.A."/>
            <person name="Rutherford K.M."/>
            <person name="Simmonds M."/>
            <person name="Skelton J."/>
            <person name="Stevens K."/>
            <person name="Whitehead S."/>
            <person name="Barrell B.G."/>
        </authorList>
    </citation>
    <scope>NUCLEOTIDE SEQUENCE [LARGE SCALE GENOMIC DNA]</scope>
    <source>
        <strain>CT18</strain>
    </source>
</reference>
<reference key="2">
    <citation type="journal article" date="2003" name="J. Bacteriol.">
        <title>Comparative genomics of Salmonella enterica serovar Typhi strains Ty2 and CT18.</title>
        <authorList>
            <person name="Deng W."/>
            <person name="Liou S.-R."/>
            <person name="Plunkett G. III"/>
            <person name="Mayhew G.F."/>
            <person name="Rose D.J."/>
            <person name="Burland V."/>
            <person name="Kodoyianni V."/>
            <person name="Schwartz D.C."/>
            <person name="Blattner F.R."/>
        </authorList>
    </citation>
    <scope>NUCLEOTIDE SEQUENCE [LARGE SCALE GENOMIC DNA]</scope>
    <source>
        <strain>ATCC 700931 / Ty2</strain>
    </source>
</reference>
<keyword id="KW-0067">ATP-binding</keyword>
<keyword id="KW-0963">Cytoplasm</keyword>
<keyword id="KW-0436">Ligase</keyword>
<keyword id="KW-0547">Nucleotide-binding</keyword>
<keyword id="KW-0819">tRNA processing</keyword>
<accession>Q8Z996</accession>
<accession>Q7CBP4</accession>
<sequence length="430" mass="48486">MTTLTLNTSLLSSRRILAAFSGGLDSTVLLHQLVLWRERHPDVTLRAIHIHHGLSPHADSWVRHCETVCERWQVPLVVERVTLADNGLGIEAHAREARYRAFAQTLLPGEVLATAQHLDDQCETFLLALKRGSGPAGLSAMGERSPFAGTLLLRPLLRETRKTLEQWAVRHGLCWIEDESNQDDAYDRNFLRLRALPLLQQRWPHFPAAVARSATLCAEQERLLDELLASDLTDCITTEGTLRLSPLMSMSDVRRAAILRRWLAMRNAPMPSRDALERIWQEVALARDDASPCLRFGDHEIRRYQSQLWWIKTVAGQHETTVAWPVWQTPLALPAGLGTVQLVPGGELRRPREEESVSIRFKAPGLLHIVGRHGGRKLKKIWQEQGIPPWRRDTTPLLFYGETLIAAAGVFVTREGAAEDKEGVSLVWHA</sequence>
<proteinExistence type="inferred from homology"/>
<gene>
    <name evidence="1" type="primary">tilS</name>
    <name type="ordered locus">STY0261</name>
    <name type="ordered locus">t0238</name>
</gene>
<name>TILS_SALTI</name>